<organism>
    <name type="scientific">Burkholderia cepacia</name>
    <name type="common">Pseudomonas cepacia</name>
    <dbReference type="NCBI Taxonomy" id="292"/>
    <lineage>
        <taxon>Bacteria</taxon>
        <taxon>Pseudomonadati</taxon>
        <taxon>Pseudomonadota</taxon>
        <taxon>Betaproteobacteria</taxon>
        <taxon>Burkholderiales</taxon>
        <taxon>Burkholderiaceae</taxon>
        <taxon>Burkholderia</taxon>
        <taxon>Burkholderia cepacia complex</taxon>
    </lineage>
</organism>
<dbReference type="EMBL" id="S77489">
    <property type="protein sequence ID" value="AAC60392.1"/>
    <property type="molecule type" value="Genomic_DNA"/>
</dbReference>
<dbReference type="EMBL" id="D12503">
    <property type="protein sequence ID" value="BAA02068.1"/>
    <property type="molecule type" value="Genomic_DNA"/>
</dbReference>
<dbReference type="PIR" id="JS0513">
    <property type="entry name" value="JS0513"/>
</dbReference>
<dbReference type="STRING" id="292.WI67_07180"/>
<dbReference type="Gene3D" id="2.40.30.170">
    <property type="match status" value="1"/>
</dbReference>
<dbReference type="InterPro" id="IPR032317">
    <property type="entry name" value="CusB_D23"/>
</dbReference>
<dbReference type="InterPro" id="IPR050393">
    <property type="entry name" value="MFP_Efflux_Pump"/>
</dbReference>
<dbReference type="PANTHER" id="PTHR30367:SF12">
    <property type="entry name" value="P-HYDROXYBENZOIC ACID EFFLUX PUMP SUBUNIT AAEA"/>
    <property type="match status" value="1"/>
</dbReference>
<dbReference type="PANTHER" id="PTHR30367">
    <property type="entry name" value="P-HYDROXYBENZOIC ACID EFFLUX PUMP SUBUNIT AAEA-RELATED"/>
    <property type="match status" value="1"/>
</dbReference>
<dbReference type="Pfam" id="PF16576">
    <property type="entry name" value="HlyD_D23"/>
    <property type="match status" value="1"/>
</dbReference>
<dbReference type="SUPFAM" id="SSF111369">
    <property type="entry name" value="HlyD-like secretion proteins"/>
    <property type="match status" value="1"/>
</dbReference>
<comment type="function">
    <text>Involved in the resistance (detoxification) of the fungal toxin fusaric acid.</text>
</comment>
<accession>P24130</accession>
<name>FUSE_BURCE</name>
<feature type="chain" id="PRO_0000201872" description="Fusaric acid resistance protein FusE">
    <location>
        <begin position="1"/>
        <end position="168"/>
    </location>
</feature>
<reference key="1">
    <citation type="journal article" date="1991" name="Agric. Biol. Chem.">
        <title>Molecular cloning and characterization of the fusaric acid-resistance gene from Pseudomonas cepacia.</title>
        <authorList>
            <person name="Utsumi R."/>
            <person name="Yagi T."/>
            <person name="Katayama S."/>
            <person name="Katsuragi K."/>
            <person name="Tachibana K."/>
            <person name="Toyoda H."/>
            <person name="Ouchi S."/>
            <person name="Obata K."/>
            <person name="Shibano Y."/>
            <person name="Noda M."/>
        </authorList>
    </citation>
    <scope>NUCLEOTIDE SEQUENCE [GENOMIC DNA]</scope>
    <source>
        <strain>UK1</strain>
    </source>
</reference>
<protein>
    <recommendedName>
        <fullName>Fusaric acid resistance protein FusE</fullName>
    </recommendedName>
</protein>
<sequence>MQIDPSHYQIAVEQAQAVAAAARSCRCRRRGRRADLDALVVSKENRENAAHSASSADAQYQQAIAALDARSSTLERSRVVAPVDGYITNLQTFKGNYAVAGQAKLAIVDSHSFWVYGYFEETKLPRVKIGAPAEMRLMSGGVMKGHVESISRGIYDRDNPQSRDLVRT</sequence>
<gene>
    <name type="primary">fusE</name>
</gene>
<proteinExistence type="predicted"/>